<gene>
    <name type="primary">mycb</name>
    <name type="synonym">cam2</name>
    <name type="synonym">myc2</name>
</gene>
<sequence>MPVSSSLAYKNYDYDYDSIQPYFYFDNDDEDFYHHQQGQTQPPAPSEDIWKKFELLPTPPLSPSRRQSLSTAEQLEMVSEFLGDDVVNQSFICDADYSQSFIKSIIIQDCMWSGFSAAAKLEKVVSEKLASLHAARKELISDSSSNRLNASYLQDLSTSASECIGPSVVFPYPLTESSKSSKVAPSEPMLVLDTPPNSSSSSGSDSEDEEEEEEEEEEEEEEEEEEEEIDVVTVEKRQKRNEAEVSDSRYPSPLVLKRCHVSTHQHNYAAHPSTRHDQPAVKRLRLESSSSNNSSSNRQGKQRKCTSPRTSDSEDNDKRRTHNVLERQRRNELKLSFFALRDEIPEVANNEKAAKVVILKKATECIHSMQLDEQRLLSIKEQLRRKSEQLKHRLQQLRSSH</sequence>
<accession>Q90342</accession>
<dbReference type="EMBL" id="D37888">
    <property type="protein sequence ID" value="BAA07130.1"/>
    <property type="molecule type" value="Genomic_DNA"/>
</dbReference>
<dbReference type="SMR" id="Q90342"/>
<dbReference type="GlyCosmos" id="Q90342">
    <property type="glycosylation" value="1 site, No reported glycans"/>
</dbReference>
<dbReference type="Proteomes" id="UP000694384">
    <property type="component" value="Unplaced"/>
</dbReference>
<dbReference type="Proteomes" id="UP000694427">
    <property type="component" value="Unplaced"/>
</dbReference>
<dbReference type="Proteomes" id="UP000694700">
    <property type="component" value="Unplaced"/>
</dbReference>
<dbReference type="Proteomes" id="UP000694701">
    <property type="component" value="Unplaced"/>
</dbReference>
<dbReference type="Proteomes" id="UP001155660">
    <property type="component" value="Unplaced"/>
</dbReference>
<dbReference type="GO" id="GO:0005634">
    <property type="term" value="C:nucleus"/>
    <property type="evidence" value="ECO:0007669"/>
    <property type="project" value="UniProtKB-SubCell"/>
</dbReference>
<dbReference type="GO" id="GO:0003677">
    <property type="term" value="F:DNA binding"/>
    <property type="evidence" value="ECO:0007669"/>
    <property type="project" value="UniProtKB-KW"/>
</dbReference>
<dbReference type="GO" id="GO:0000981">
    <property type="term" value="F:DNA-binding transcription factor activity, RNA polymerase II-specific"/>
    <property type="evidence" value="ECO:0000250"/>
    <property type="project" value="UniProtKB"/>
</dbReference>
<dbReference type="GO" id="GO:0046983">
    <property type="term" value="F:protein dimerization activity"/>
    <property type="evidence" value="ECO:0007669"/>
    <property type="project" value="InterPro"/>
</dbReference>
<dbReference type="CDD" id="cd11458">
    <property type="entry name" value="bHLHzip_c-Myc"/>
    <property type="match status" value="1"/>
</dbReference>
<dbReference type="FunFam" id="4.10.280.10:FF:000019">
    <property type="entry name" value="Myc proto-oncogene protein"/>
    <property type="match status" value="1"/>
</dbReference>
<dbReference type="Gene3D" id="4.10.280.10">
    <property type="entry name" value="Helix-loop-helix DNA-binding domain"/>
    <property type="match status" value="1"/>
</dbReference>
<dbReference type="InterPro" id="IPR011598">
    <property type="entry name" value="bHLH_dom"/>
</dbReference>
<dbReference type="InterPro" id="IPR036638">
    <property type="entry name" value="HLH_DNA-bd_sf"/>
</dbReference>
<dbReference type="InterPro" id="IPR003327">
    <property type="entry name" value="Myc-LZ"/>
</dbReference>
<dbReference type="InterPro" id="IPR050433">
    <property type="entry name" value="Myc_transcription_factors"/>
</dbReference>
<dbReference type="InterPro" id="IPR002418">
    <property type="entry name" value="Tscrpt_reg_Myc"/>
</dbReference>
<dbReference type="InterPro" id="IPR012682">
    <property type="entry name" value="Tscrpt_reg_Myc_N"/>
</dbReference>
<dbReference type="PANTHER" id="PTHR45851">
    <property type="entry name" value="MYC PROTO-ONCOGENE"/>
    <property type="match status" value="1"/>
</dbReference>
<dbReference type="Pfam" id="PF00010">
    <property type="entry name" value="HLH"/>
    <property type="match status" value="1"/>
</dbReference>
<dbReference type="Pfam" id="PF02344">
    <property type="entry name" value="Myc-LZ"/>
    <property type="match status" value="1"/>
</dbReference>
<dbReference type="Pfam" id="PF01056">
    <property type="entry name" value="Myc_N"/>
    <property type="match status" value="1"/>
</dbReference>
<dbReference type="PIRSF" id="PIRSF001705">
    <property type="entry name" value="Myc_protein"/>
    <property type="match status" value="1"/>
</dbReference>
<dbReference type="PRINTS" id="PR00044">
    <property type="entry name" value="LEUZIPPRMYC"/>
</dbReference>
<dbReference type="SMART" id="SM00353">
    <property type="entry name" value="HLH"/>
    <property type="match status" value="1"/>
</dbReference>
<dbReference type="SUPFAM" id="SSF47459">
    <property type="entry name" value="HLH, helix-loop-helix DNA-binding domain"/>
    <property type="match status" value="1"/>
</dbReference>
<dbReference type="PROSITE" id="PS50888">
    <property type="entry name" value="BHLH"/>
    <property type="match status" value="1"/>
</dbReference>
<protein>
    <recommendedName>
        <fullName>Transcriptional regulator Myc-2</fullName>
        <shortName>c-Myc-2</shortName>
    </recommendedName>
    <alternativeName>
        <fullName>c-Myc II</fullName>
    </alternativeName>
</protein>
<proteinExistence type="inferred from homology"/>
<feature type="chain" id="PRO_0000127317" description="Transcriptional regulator Myc-2">
    <location>
        <begin position="1"/>
        <end position="401"/>
    </location>
</feature>
<feature type="domain" description="bHLH" evidence="3">
    <location>
        <begin position="317"/>
        <end position="369"/>
    </location>
</feature>
<feature type="region of interest" description="Disordered" evidence="4">
    <location>
        <begin position="177"/>
        <end position="251"/>
    </location>
</feature>
<feature type="region of interest" description="Disordered" evidence="4">
    <location>
        <begin position="286"/>
        <end position="325"/>
    </location>
</feature>
<feature type="region of interest" description="Leucine-zipper">
    <location>
        <begin position="376"/>
        <end position="397"/>
    </location>
</feature>
<feature type="short sequence motif" description="9aaTAD" evidence="2">
    <location>
        <begin position="76"/>
        <end position="84"/>
    </location>
</feature>
<feature type="compositionally biased region" description="Acidic residues" evidence="4">
    <location>
        <begin position="205"/>
        <end position="230"/>
    </location>
</feature>
<feature type="compositionally biased region" description="Basic and acidic residues" evidence="4">
    <location>
        <begin position="233"/>
        <end position="247"/>
    </location>
</feature>
<feature type="compositionally biased region" description="Low complexity" evidence="4">
    <location>
        <begin position="288"/>
        <end position="297"/>
    </location>
</feature>
<feature type="glycosylation site" description="O-linked (GlcNAc) threonine" evidence="1">
    <location>
        <position position="58"/>
    </location>
</feature>
<evidence type="ECO:0000250" key="1"/>
<evidence type="ECO:0000250" key="2">
    <source>
        <dbReference type="UniProtKB" id="P01106"/>
    </source>
</evidence>
<evidence type="ECO:0000255" key="3">
    <source>
        <dbReference type="PROSITE-ProRule" id="PRU00981"/>
    </source>
</evidence>
<evidence type="ECO:0000256" key="4">
    <source>
        <dbReference type="SAM" id="MobiDB-lite"/>
    </source>
</evidence>
<reference key="1">
    <citation type="journal article" date="1995" name="Gene">
        <title>Two c-myc genes from a tetraploid fish, the common carp (Cyprinus carpio).</title>
        <authorList>
            <person name="Zhang H."/>
            <person name="Okamoto N."/>
            <person name="Ikeda Y."/>
        </authorList>
    </citation>
    <scope>NUCLEOTIDE SEQUENCE [GENOMIC DNA]</scope>
    <source>
        <tissue>Hepatopancreas</tissue>
    </source>
</reference>
<name>MYC2_CYPCA</name>
<comment type="function">
    <text evidence="2">Transcription factor that binds DNA in a non-specific manner, yet also specifically recognizes the core sequence 5'-CAC[GA]TG-3'. Activates the transcription of growth-related genes.</text>
</comment>
<comment type="subunit">
    <text evidence="1">Efficient DNA binding requires dimerization with another bHLH protein. Binds DNA as a heterodimer with MAX (By similarity).</text>
</comment>
<comment type="subcellular location">
    <subcellularLocation>
        <location>Nucleus</location>
    </subcellularLocation>
</comment>
<comment type="domain">
    <text evidence="2">The 9aaTAD motif is a transactivation domain present in a large number of yeast and animal transcription factors.</text>
</comment>
<organism>
    <name type="scientific">Cyprinus carpio</name>
    <name type="common">Common carp</name>
    <dbReference type="NCBI Taxonomy" id="7962"/>
    <lineage>
        <taxon>Eukaryota</taxon>
        <taxon>Metazoa</taxon>
        <taxon>Chordata</taxon>
        <taxon>Craniata</taxon>
        <taxon>Vertebrata</taxon>
        <taxon>Euteleostomi</taxon>
        <taxon>Actinopterygii</taxon>
        <taxon>Neopterygii</taxon>
        <taxon>Teleostei</taxon>
        <taxon>Ostariophysi</taxon>
        <taxon>Cypriniformes</taxon>
        <taxon>Cyprinidae</taxon>
        <taxon>Cyprininae</taxon>
        <taxon>Cyprinus</taxon>
    </lineage>
</organism>
<keyword id="KW-0010">Activator</keyword>
<keyword id="KW-0238">DNA-binding</keyword>
<keyword id="KW-0325">Glycoprotein</keyword>
<keyword id="KW-0539">Nucleus</keyword>
<keyword id="KW-1185">Reference proteome</keyword>
<keyword id="KW-0804">Transcription</keyword>
<keyword id="KW-0805">Transcription regulation</keyword>